<evidence type="ECO:0000255" key="1">
    <source>
        <dbReference type="HAMAP-Rule" id="MF_01014"/>
    </source>
</evidence>
<organism>
    <name type="scientific">Synechococcus sp. (strain CC9605)</name>
    <dbReference type="NCBI Taxonomy" id="110662"/>
    <lineage>
        <taxon>Bacteria</taxon>
        <taxon>Bacillati</taxon>
        <taxon>Cyanobacteriota</taxon>
        <taxon>Cyanophyceae</taxon>
        <taxon>Synechococcales</taxon>
        <taxon>Synechococcaceae</taxon>
        <taxon>Synechococcus</taxon>
    </lineage>
</organism>
<keyword id="KW-0028">Amino-acid biosynthesis</keyword>
<keyword id="KW-0963">Cytoplasm</keyword>
<keyword id="KW-0368">Histidine biosynthesis</keyword>
<keyword id="KW-0413">Isomerase</keyword>
<sequence>MEIIPAIDLLDGACVRLHQGDYDQVTRFSEDPVAQALSWQSQGATRLHLVDLDGAKRGEPINDAAVRAITAALDIPVQLGGGVRSLERAEELISCGLDRVILGTVAIEQPELVQELAQRHPGRIVVGIDANDGRVATRGWIEQSDVLATDLAKQFSAAGIAAIITTDIATDGTLAGPNLEALRTMAQCSAVPVIASGGIGCMADLLSLLPLEPLGVTGVIVGRALYDGRVDLAEAIAALGEARLQDVTAVAADIA</sequence>
<proteinExistence type="inferred from homology"/>
<comment type="catalytic activity">
    <reaction evidence="1">
        <text>1-(5-phospho-beta-D-ribosyl)-5-[(5-phospho-beta-D-ribosylamino)methylideneamino]imidazole-4-carboxamide = 5-[(5-phospho-1-deoxy-D-ribulos-1-ylimino)methylamino]-1-(5-phospho-beta-D-ribosyl)imidazole-4-carboxamide</text>
        <dbReference type="Rhea" id="RHEA:15469"/>
        <dbReference type="ChEBI" id="CHEBI:58435"/>
        <dbReference type="ChEBI" id="CHEBI:58525"/>
        <dbReference type="EC" id="5.3.1.16"/>
    </reaction>
</comment>
<comment type="pathway">
    <text evidence="1">Amino-acid biosynthesis; L-histidine biosynthesis; L-histidine from 5-phospho-alpha-D-ribose 1-diphosphate: step 4/9.</text>
</comment>
<comment type="subcellular location">
    <subcellularLocation>
        <location evidence="1">Cytoplasm</location>
    </subcellularLocation>
</comment>
<comment type="similarity">
    <text evidence="1">Belongs to the HisA/HisF family.</text>
</comment>
<name>HIS4_SYNSC</name>
<accession>Q3AIG3</accession>
<feature type="chain" id="PRO_0000290552" description="1-(5-phosphoribosyl)-5-[(5-phosphoribosylamino)methylideneamino] imidazole-4-carboxamide isomerase">
    <location>
        <begin position="1"/>
        <end position="255"/>
    </location>
</feature>
<feature type="active site" description="Proton acceptor" evidence="1">
    <location>
        <position position="8"/>
    </location>
</feature>
<feature type="active site" description="Proton donor" evidence="1">
    <location>
        <position position="129"/>
    </location>
</feature>
<dbReference type="EC" id="5.3.1.16" evidence="1"/>
<dbReference type="EMBL" id="CP000110">
    <property type="protein sequence ID" value="ABB35619.1"/>
    <property type="molecule type" value="Genomic_DNA"/>
</dbReference>
<dbReference type="RefSeq" id="WP_011364828.1">
    <property type="nucleotide sequence ID" value="NC_007516.1"/>
</dbReference>
<dbReference type="SMR" id="Q3AIG3"/>
<dbReference type="STRING" id="110662.Syncc9605_1876"/>
<dbReference type="KEGG" id="syd:Syncc9605_1876"/>
<dbReference type="eggNOG" id="COG0106">
    <property type="taxonomic scope" value="Bacteria"/>
</dbReference>
<dbReference type="HOGENOM" id="CLU_048577_1_1_3"/>
<dbReference type="OrthoDB" id="9807749at2"/>
<dbReference type="UniPathway" id="UPA00031">
    <property type="reaction ID" value="UER00009"/>
</dbReference>
<dbReference type="GO" id="GO:0005737">
    <property type="term" value="C:cytoplasm"/>
    <property type="evidence" value="ECO:0007669"/>
    <property type="project" value="UniProtKB-SubCell"/>
</dbReference>
<dbReference type="GO" id="GO:0003949">
    <property type="term" value="F:1-(5-phosphoribosyl)-5-[(5-phosphoribosylamino)methylideneamino]imidazole-4-carboxamide isomerase activity"/>
    <property type="evidence" value="ECO:0007669"/>
    <property type="project" value="UniProtKB-UniRule"/>
</dbReference>
<dbReference type="GO" id="GO:0000105">
    <property type="term" value="P:L-histidine biosynthetic process"/>
    <property type="evidence" value="ECO:0007669"/>
    <property type="project" value="UniProtKB-UniRule"/>
</dbReference>
<dbReference type="GO" id="GO:0000162">
    <property type="term" value="P:L-tryptophan biosynthetic process"/>
    <property type="evidence" value="ECO:0007669"/>
    <property type="project" value="TreeGrafter"/>
</dbReference>
<dbReference type="CDD" id="cd04732">
    <property type="entry name" value="HisA"/>
    <property type="match status" value="1"/>
</dbReference>
<dbReference type="FunFam" id="3.20.20.70:FF:000009">
    <property type="entry name" value="1-(5-phosphoribosyl)-5-[(5-phosphoribosylamino)methylideneamino] imidazole-4-carboxamide isomerase"/>
    <property type="match status" value="1"/>
</dbReference>
<dbReference type="Gene3D" id="3.20.20.70">
    <property type="entry name" value="Aldolase class I"/>
    <property type="match status" value="1"/>
</dbReference>
<dbReference type="HAMAP" id="MF_01014">
    <property type="entry name" value="HisA"/>
    <property type="match status" value="1"/>
</dbReference>
<dbReference type="InterPro" id="IPR013785">
    <property type="entry name" value="Aldolase_TIM"/>
</dbReference>
<dbReference type="InterPro" id="IPR006062">
    <property type="entry name" value="His_biosynth"/>
</dbReference>
<dbReference type="InterPro" id="IPR006063">
    <property type="entry name" value="HisA_bact_arch"/>
</dbReference>
<dbReference type="InterPro" id="IPR044524">
    <property type="entry name" value="Isoase_HisA-like"/>
</dbReference>
<dbReference type="InterPro" id="IPR023016">
    <property type="entry name" value="Isoase_HisA-like_bact"/>
</dbReference>
<dbReference type="InterPro" id="IPR011060">
    <property type="entry name" value="RibuloseP-bd_barrel"/>
</dbReference>
<dbReference type="NCBIfam" id="TIGR00007">
    <property type="entry name" value="1-(5-phosphoribosyl)-5-[(5-phosphoribosylamino)methylideneamino]imidazole-4-carboxamide isomerase"/>
    <property type="match status" value="1"/>
</dbReference>
<dbReference type="NCBIfam" id="NF010112">
    <property type="entry name" value="PRK13585.1"/>
    <property type="match status" value="1"/>
</dbReference>
<dbReference type="PANTHER" id="PTHR43090">
    <property type="entry name" value="1-(5-PHOSPHORIBOSYL)-5-[(5-PHOSPHORIBOSYLAMINO)METHYLIDENEAMINO] IMIDAZOLE-4-CARBOXAMIDE ISOMERASE"/>
    <property type="match status" value="1"/>
</dbReference>
<dbReference type="PANTHER" id="PTHR43090:SF2">
    <property type="entry name" value="1-(5-PHOSPHORIBOSYL)-5-[(5-PHOSPHORIBOSYLAMINO)METHYLIDENEAMINO] IMIDAZOLE-4-CARBOXAMIDE ISOMERASE"/>
    <property type="match status" value="1"/>
</dbReference>
<dbReference type="Pfam" id="PF00977">
    <property type="entry name" value="His_biosynth"/>
    <property type="match status" value="1"/>
</dbReference>
<dbReference type="SUPFAM" id="SSF51366">
    <property type="entry name" value="Ribulose-phoshate binding barrel"/>
    <property type="match status" value="1"/>
</dbReference>
<gene>
    <name evidence="1" type="primary">hisA</name>
    <name type="ordered locus">Syncc9605_1876</name>
</gene>
<protein>
    <recommendedName>
        <fullName evidence="1">1-(5-phosphoribosyl)-5-[(5-phosphoribosylamino)methylideneamino] imidazole-4-carboxamide isomerase</fullName>
        <ecNumber evidence="1">5.3.1.16</ecNumber>
    </recommendedName>
    <alternativeName>
        <fullName evidence="1">Phosphoribosylformimino-5-aminoimidazole carboxamide ribotide isomerase</fullName>
    </alternativeName>
</protein>
<reference key="1">
    <citation type="submission" date="2005-07" db="EMBL/GenBank/DDBJ databases">
        <title>Complete sequence of Synechococcus sp. CC9605.</title>
        <authorList>
            <consortium name="US DOE Joint Genome Institute"/>
            <person name="Copeland A."/>
            <person name="Lucas S."/>
            <person name="Lapidus A."/>
            <person name="Barry K."/>
            <person name="Detter J.C."/>
            <person name="Glavina T."/>
            <person name="Hammon N."/>
            <person name="Israni S."/>
            <person name="Pitluck S."/>
            <person name="Schmutz J."/>
            <person name="Martinez M."/>
            <person name="Larimer F."/>
            <person name="Land M."/>
            <person name="Kyrpides N."/>
            <person name="Ivanova N."/>
            <person name="Richardson P."/>
        </authorList>
    </citation>
    <scope>NUCLEOTIDE SEQUENCE [LARGE SCALE GENOMIC DNA]</scope>
    <source>
        <strain>CC9605</strain>
    </source>
</reference>